<sequence length="217" mass="23029">MQIFLDSTDTKVIADLASTGLIDGVTTNPTLIAKSGRPMLEVIAEICDIVPGPISAEVAATTADAMIAEGQKLAKIAPNVVVKIPLTRDGLIACAAFADEEIKTNVTLCFSPTQALLAAKAGATYISPFIGRLDDYGFDGMDLIRDIRAIYDNYGYETEILAASVRNAAHVKEAAIVGADVVTIPPAVFSDLYKHPLTDKGLEQFLKDWASTGQSIL</sequence>
<name>TAL_CAUVN</name>
<protein>
    <recommendedName>
        <fullName evidence="1">Probable transaldolase</fullName>
        <ecNumber evidence="1">2.2.1.2</ecNumber>
    </recommendedName>
</protein>
<organism>
    <name type="scientific">Caulobacter vibrioides (strain NA1000 / CB15N)</name>
    <name type="common">Caulobacter crescentus</name>
    <dbReference type="NCBI Taxonomy" id="565050"/>
    <lineage>
        <taxon>Bacteria</taxon>
        <taxon>Pseudomonadati</taxon>
        <taxon>Pseudomonadota</taxon>
        <taxon>Alphaproteobacteria</taxon>
        <taxon>Caulobacterales</taxon>
        <taxon>Caulobacteraceae</taxon>
        <taxon>Caulobacter</taxon>
    </lineage>
</organism>
<keyword id="KW-0963">Cytoplasm</keyword>
<keyword id="KW-0570">Pentose shunt</keyword>
<keyword id="KW-1185">Reference proteome</keyword>
<keyword id="KW-0704">Schiff base</keyword>
<keyword id="KW-0808">Transferase</keyword>
<evidence type="ECO:0000255" key="1">
    <source>
        <dbReference type="HAMAP-Rule" id="MF_00494"/>
    </source>
</evidence>
<dbReference type="EC" id="2.2.1.2" evidence="1"/>
<dbReference type="EMBL" id="CP001340">
    <property type="protein sequence ID" value="ACL97194.1"/>
    <property type="molecule type" value="Genomic_DNA"/>
</dbReference>
<dbReference type="RefSeq" id="YP_002519102.1">
    <property type="nucleotide sequence ID" value="NC_011916.1"/>
</dbReference>
<dbReference type="SMR" id="B8H6D3"/>
<dbReference type="GeneID" id="7331925"/>
<dbReference type="KEGG" id="ccs:CCNA_03729"/>
<dbReference type="PATRIC" id="fig|565050.3.peg.3635"/>
<dbReference type="HOGENOM" id="CLU_079764_0_0_5"/>
<dbReference type="OrthoDB" id="9807051at2"/>
<dbReference type="PhylomeDB" id="B8H6D3"/>
<dbReference type="UniPathway" id="UPA00115">
    <property type="reaction ID" value="UER00414"/>
</dbReference>
<dbReference type="Proteomes" id="UP000001364">
    <property type="component" value="Chromosome"/>
</dbReference>
<dbReference type="GO" id="GO:0005737">
    <property type="term" value="C:cytoplasm"/>
    <property type="evidence" value="ECO:0007669"/>
    <property type="project" value="UniProtKB-SubCell"/>
</dbReference>
<dbReference type="GO" id="GO:0016832">
    <property type="term" value="F:aldehyde-lyase activity"/>
    <property type="evidence" value="ECO:0007669"/>
    <property type="project" value="InterPro"/>
</dbReference>
<dbReference type="GO" id="GO:0004801">
    <property type="term" value="F:transaldolase activity"/>
    <property type="evidence" value="ECO:0007669"/>
    <property type="project" value="UniProtKB-UniRule"/>
</dbReference>
<dbReference type="GO" id="GO:0005975">
    <property type="term" value="P:carbohydrate metabolic process"/>
    <property type="evidence" value="ECO:0007669"/>
    <property type="project" value="InterPro"/>
</dbReference>
<dbReference type="GO" id="GO:0006098">
    <property type="term" value="P:pentose-phosphate shunt"/>
    <property type="evidence" value="ECO:0007669"/>
    <property type="project" value="UniProtKB-UniRule"/>
</dbReference>
<dbReference type="CDD" id="cd00956">
    <property type="entry name" value="Transaldolase_FSA"/>
    <property type="match status" value="1"/>
</dbReference>
<dbReference type="FunFam" id="3.20.20.70:FF:000018">
    <property type="entry name" value="Probable transaldolase"/>
    <property type="match status" value="1"/>
</dbReference>
<dbReference type="Gene3D" id="3.20.20.70">
    <property type="entry name" value="Aldolase class I"/>
    <property type="match status" value="1"/>
</dbReference>
<dbReference type="HAMAP" id="MF_00494">
    <property type="entry name" value="Transaldolase_3b"/>
    <property type="match status" value="1"/>
</dbReference>
<dbReference type="InterPro" id="IPR013785">
    <property type="entry name" value="Aldolase_TIM"/>
</dbReference>
<dbReference type="InterPro" id="IPR001585">
    <property type="entry name" value="TAL/FSA"/>
</dbReference>
<dbReference type="InterPro" id="IPR022999">
    <property type="entry name" value="Transaldolase_3B"/>
</dbReference>
<dbReference type="InterPro" id="IPR004731">
    <property type="entry name" value="Transaldolase_3B/F6P_aldolase"/>
</dbReference>
<dbReference type="InterPro" id="IPR018225">
    <property type="entry name" value="Transaldolase_AS"/>
</dbReference>
<dbReference type="InterPro" id="IPR033919">
    <property type="entry name" value="TSA/FSA_arc/bac"/>
</dbReference>
<dbReference type="NCBIfam" id="TIGR00875">
    <property type="entry name" value="fsa_talC_mipB"/>
    <property type="match status" value="1"/>
</dbReference>
<dbReference type="PANTHER" id="PTHR10683:SF40">
    <property type="entry name" value="FRUCTOSE-6-PHOSPHATE ALDOLASE 1-RELATED"/>
    <property type="match status" value="1"/>
</dbReference>
<dbReference type="PANTHER" id="PTHR10683">
    <property type="entry name" value="TRANSALDOLASE"/>
    <property type="match status" value="1"/>
</dbReference>
<dbReference type="Pfam" id="PF00923">
    <property type="entry name" value="TAL_FSA"/>
    <property type="match status" value="1"/>
</dbReference>
<dbReference type="SUPFAM" id="SSF51569">
    <property type="entry name" value="Aldolase"/>
    <property type="match status" value="1"/>
</dbReference>
<dbReference type="PROSITE" id="PS01054">
    <property type="entry name" value="TRANSALDOLASE_1"/>
    <property type="match status" value="1"/>
</dbReference>
<gene>
    <name evidence="1" type="primary">tal</name>
    <name type="ordered locus">CCNA_03729</name>
</gene>
<comment type="function">
    <text evidence="1">Transaldolase is important for the balance of metabolites in the pentose-phosphate pathway.</text>
</comment>
<comment type="catalytic activity">
    <reaction evidence="1">
        <text>D-sedoheptulose 7-phosphate + D-glyceraldehyde 3-phosphate = D-erythrose 4-phosphate + beta-D-fructose 6-phosphate</text>
        <dbReference type="Rhea" id="RHEA:17053"/>
        <dbReference type="ChEBI" id="CHEBI:16897"/>
        <dbReference type="ChEBI" id="CHEBI:57483"/>
        <dbReference type="ChEBI" id="CHEBI:57634"/>
        <dbReference type="ChEBI" id="CHEBI:59776"/>
        <dbReference type="EC" id="2.2.1.2"/>
    </reaction>
</comment>
<comment type="pathway">
    <text evidence="1">Carbohydrate degradation; pentose phosphate pathway; D-glyceraldehyde 3-phosphate and beta-D-fructose 6-phosphate from D-ribose 5-phosphate and D-xylulose 5-phosphate (non-oxidative stage): step 2/3.</text>
</comment>
<comment type="subcellular location">
    <subcellularLocation>
        <location evidence="1">Cytoplasm</location>
    </subcellularLocation>
</comment>
<comment type="similarity">
    <text evidence="1">Belongs to the transaldolase family. Type 3B subfamily.</text>
</comment>
<feature type="chain" id="PRO_1000198469" description="Probable transaldolase">
    <location>
        <begin position="1"/>
        <end position="217"/>
    </location>
</feature>
<feature type="active site" description="Schiff-base intermediate with substrate" evidence="1">
    <location>
        <position position="83"/>
    </location>
</feature>
<reference key="1">
    <citation type="journal article" date="2010" name="J. Bacteriol.">
        <title>The genetic basis of laboratory adaptation in Caulobacter crescentus.</title>
        <authorList>
            <person name="Marks M.E."/>
            <person name="Castro-Rojas C.M."/>
            <person name="Teiling C."/>
            <person name="Du L."/>
            <person name="Kapatral V."/>
            <person name="Walunas T.L."/>
            <person name="Crosson S."/>
        </authorList>
    </citation>
    <scope>NUCLEOTIDE SEQUENCE [LARGE SCALE GENOMIC DNA]</scope>
    <source>
        <strain>NA1000 / CB15N</strain>
    </source>
</reference>
<accession>B8H6D3</accession>
<proteinExistence type="inferred from homology"/>